<feature type="chain" id="PRO_1000008067" description="DNA mismatch repair protein MutS">
    <location>
        <begin position="1"/>
        <end position="857"/>
    </location>
</feature>
<feature type="binding site" evidence="1">
    <location>
        <begin position="608"/>
        <end position="615"/>
    </location>
    <ligand>
        <name>ATP</name>
        <dbReference type="ChEBI" id="CHEBI:30616"/>
    </ligand>
</feature>
<sequence>MPQKTSETPMMQQYNEIKAQYPDAFLFYRIGDFYELFNDDAIKGAQLLELTLTARNKSADDPIPMAGVPHHAVQSYVDILIDHGYKVAICEQMEDPKKAVGMVKRAVIQLVTPGTNVDIKAGAAKSNNYITAVMPHAAGYAFAYADVSTGELKVTDLKSKFALQNELSALATKEIVVPEELTDDDAGMLKQGERLLSVQPDAEPTSEGSYVSQALTDPAEAAVVQMLMAYLLNTQKRSLAHIQKAVAYQPSAYLEMDQDARSNLDILQNSRTGRKGDTLLSLLDSTKTAMGGRLLKQWLDRPLLDIDAISVRQNQVQDLLDHFFERSELQERLTKVYDLERLAGRVAFGTVNGRDLIQLQTSLDQIPAIQDVLGKLDDGSFKALRSKMDPVSDVAGLIRRAIEPEPPISVTDGGLILRGYNQKLDSYRDAMKNSKQWIAELEASERKATGIHTLKIRYNKVFGYFIEVTKSNLDKIPEGRYERKQTLTNAERFITPELKEKETLILEAQESSTALEYDLFQDIRDKVKAQIKRLQALAAQISSLDVLQSFATVAENSHYVRPTMHAGTHDINVKGGRHPVVEHVLGRDSYIPNDVIMNHDTDMLLITGPNMSGKSTYMRQLALIVIMAQAGSFVPADVADLPIFDQIFTRIGAADDLANGESTFMVEMLEANAALSHATASSLILFDEIGRGTATYDGMALAQAIIEFLHDHVHAKTLFSTHYHELTSLSDSLAKLKNVHVGAVEEHGNLVFLHKMMPGPADKSYGIHVAKLAGLPADLLARADTILKQLEADAPNKTAPAPAPQVEEQQLSLFEEPKPTPKNSPILTKLAKFDLMAATPMDAMNFIFDLQKHLKKK</sequence>
<dbReference type="EMBL" id="CP000423">
    <property type="protein sequence ID" value="ABJ70980.1"/>
    <property type="molecule type" value="Genomic_DNA"/>
</dbReference>
<dbReference type="RefSeq" id="WP_011674831.1">
    <property type="nucleotide sequence ID" value="NC_008526.1"/>
</dbReference>
<dbReference type="RefSeq" id="YP_807422.1">
    <property type="nucleotide sequence ID" value="NC_008526.1"/>
</dbReference>
<dbReference type="SMR" id="Q035Z2"/>
<dbReference type="STRING" id="321967.LSEI_2235"/>
<dbReference type="PaxDb" id="321967-LSEI_2235"/>
<dbReference type="GeneID" id="57090846"/>
<dbReference type="KEGG" id="lca:LSEI_2235"/>
<dbReference type="PATRIC" id="fig|321967.11.peg.2197"/>
<dbReference type="HOGENOM" id="CLU_002472_4_0_9"/>
<dbReference type="Proteomes" id="UP000001651">
    <property type="component" value="Chromosome"/>
</dbReference>
<dbReference type="GO" id="GO:0005829">
    <property type="term" value="C:cytosol"/>
    <property type="evidence" value="ECO:0007669"/>
    <property type="project" value="TreeGrafter"/>
</dbReference>
<dbReference type="GO" id="GO:0005524">
    <property type="term" value="F:ATP binding"/>
    <property type="evidence" value="ECO:0007669"/>
    <property type="project" value="UniProtKB-UniRule"/>
</dbReference>
<dbReference type="GO" id="GO:0140664">
    <property type="term" value="F:ATP-dependent DNA damage sensor activity"/>
    <property type="evidence" value="ECO:0007669"/>
    <property type="project" value="InterPro"/>
</dbReference>
<dbReference type="GO" id="GO:0003684">
    <property type="term" value="F:damaged DNA binding"/>
    <property type="evidence" value="ECO:0007669"/>
    <property type="project" value="UniProtKB-UniRule"/>
</dbReference>
<dbReference type="GO" id="GO:0030983">
    <property type="term" value="F:mismatched DNA binding"/>
    <property type="evidence" value="ECO:0007669"/>
    <property type="project" value="InterPro"/>
</dbReference>
<dbReference type="GO" id="GO:0006298">
    <property type="term" value="P:mismatch repair"/>
    <property type="evidence" value="ECO:0007669"/>
    <property type="project" value="UniProtKB-UniRule"/>
</dbReference>
<dbReference type="CDD" id="cd03284">
    <property type="entry name" value="ABC_MutS1"/>
    <property type="match status" value="1"/>
</dbReference>
<dbReference type="FunFam" id="1.10.1420.10:FF:000007">
    <property type="entry name" value="DNA mismatch repair protein MutS"/>
    <property type="match status" value="1"/>
</dbReference>
<dbReference type="FunFam" id="3.40.1170.10:FF:000001">
    <property type="entry name" value="DNA mismatch repair protein MutS"/>
    <property type="match status" value="1"/>
</dbReference>
<dbReference type="FunFam" id="3.40.50.300:FF:000896">
    <property type="entry name" value="DNA mismatch repair protein MutS"/>
    <property type="match status" value="1"/>
</dbReference>
<dbReference type="Gene3D" id="1.10.1420.10">
    <property type="match status" value="2"/>
</dbReference>
<dbReference type="Gene3D" id="3.40.1170.10">
    <property type="entry name" value="DNA repair protein MutS, domain I"/>
    <property type="match status" value="1"/>
</dbReference>
<dbReference type="Gene3D" id="3.30.420.110">
    <property type="entry name" value="MutS, connector domain"/>
    <property type="match status" value="1"/>
</dbReference>
<dbReference type="Gene3D" id="3.40.50.300">
    <property type="entry name" value="P-loop containing nucleotide triphosphate hydrolases"/>
    <property type="match status" value="1"/>
</dbReference>
<dbReference type="HAMAP" id="MF_00096">
    <property type="entry name" value="MutS"/>
    <property type="match status" value="1"/>
</dbReference>
<dbReference type="InterPro" id="IPR005748">
    <property type="entry name" value="DNA_mismatch_repair_MutS"/>
</dbReference>
<dbReference type="InterPro" id="IPR007695">
    <property type="entry name" value="DNA_mismatch_repair_MutS-lik_N"/>
</dbReference>
<dbReference type="InterPro" id="IPR017261">
    <property type="entry name" value="DNA_mismatch_repair_MutS/MSH"/>
</dbReference>
<dbReference type="InterPro" id="IPR000432">
    <property type="entry name" value="DNA_mismatch_repair_MutS_C"/>
</dbReference>
<dbReference type="InterPro" id="IPR007861">
    <property type="entry name" value="DNA_mismatch_repair_MutS_clamp"/>
</dbReference>
<dbReference type="InterPro" id="IPR007696">
    <property type="entry name" value="DNA_mismatch_repair_MutS_core"/>
</dbReference>
<dbReference type="InterPro" id="IPR016151">
    <property type="entry name" value="DNA_mismatch_repair_MutS_N"/>
</dbReference>
<dbReference type="InterPro" id="IPR036187">
    <property type="entry name" value="DNA_mismatch_repair_MutS_sf"/>
</dbReference>
<dbReference type="InterPro" id="IPR007860">
    <property type="entry name" value="DNA_mmatch_repair_MutS_con_dom"/>
</dbReference>
<dbReference type="InterPro" id="IPR045076">
    <property type="entry name" value="MutS"/>
</dbReference>
<dbReference type="InterPro" id="IPR036678">
    <property type="entry name" value="MutS_con_dom_sf"/>
</dbReference>
<dbReference type="InterPro" id="IPR027417">
    <property type="entry name" value="P-loop_NTPase"/>
</dbReference>
<dbReference type="NCBIfam" id="TIGR01070">
    <property type="entry name" value="mutS1"/>
    <property type="match status" value="1"/>
</dbReference>
<dbReference type="NCBIfam" id="NF003810">
    <property type="entry name" value="PRK05399.1"/>
    <property type="match status" value="1"/>
</dbReference>
<dbReference type="PANTHER" id="PTHR11361:SF34">
    <property type="entry name" value="DNA MISMATCH REPAIR PROTEIN MSH1, MITOCHONDRIAL"/>
    <property type="match status" value="1"/>
</dbReference>
<dbReference type="PANTHER" id="PTHR11361">
    <property type="entry name" value="DNA MISMATCH REPAIR PROTEIN MUTS FAMILY MEMBER"/>
    <property type="match status" value="1"/>
</dbReference>
<dbReference type="Pfam" id="PF01624">
    <property type="entry name" value="MutS_I"/>
    <property type="match status" value="1"/>
</dbReference>
<dbReference type="Pfam" id="PF05188">
    <property type="entry name" value="MutS_II"/>
    <property type="match status" value="1"/>
</dbReference>
<dbReference type="Pfam" id="PF05192">
    <property type="entry name" value="MutS_III"/>
    <property type="match status" value="1"/>
</dbReference>
<dbReference type="Pfam" id="PF05190">
    <property type="entry name" value="MutS_IV"/>
    <property type="match status" value="1"/>
</dbReference>
<dbReference type="Pfam" id="PF00488">
    <property type="entry name" value="MutS_V"/>
    <property type="match status" value="1"/>
</dbReference>
<dbReference type="PIRSF" id="PIRSF037677">
    <property type="entry name" value="DNA_mis_repair_Msh6"/>
    <property type="match status" value="1"/>
</dbReference>
<dbReference type="SMART" id="SM00534">
    <property type="entry name" value="MUTSac"/>
    <property type="match status" value="1"/>
</dbReference>
<dbReference type="SMART" id="SM00533">
    <property type="entry name" value="MUTSd"/>
    <property type="match status" value="1"/>
</dbReference>
<dbReference type="SUPFAM" id="SSF55271">
    <property type="entry name" value="DNA repair protein MutS, domain I"/>
    <property type="match status" value="1"/>
</dbReference>
<dbReference type="SUPFAM" id="SSF53150">
    <property type="entry name" value="DNA repair protein MutS, domain II"/>
    <property type="match status" value="1"/>
</dbReference>
<dbReference type="SUPFAM" id="SSF48334">
    <property type="entry name" value="DNA repair protein MutS, domain III"/>
    <property type="match status" value="1"/>
</dbReference>
<dbReference type="SUPFAM" id="SSF52540">
    <property type="entry name" value="P-loop containing nucleoside triphosphate hydrolases"/>
    <property type="match status" value="1"/>
</dbReference>
<dbReference type="PROSITE" id="PS00486">
    <property type="entry name" value="DNA_MISMATCH_REPAIR_2"/>
    <property type="match status" value="1"/>
</dbReference>
<protein>
    <recommendedName>
        <fullName evidence="1">DNA mismatch repair protein MutS</fullName>
    </recommendedName>
</protein>
<comment type="function">
    <text evidence="1">This protein is involved in the repair of mismatches in DNA. It is possible that it carries out the mismatch recognition step. This protein has a weak ATPase activity.</text>
</comment>
<comment type="similarity">
    <text evidence="1">Belongs to the DNA mismatch repair MutS family.</text>
</comment>
<gene>
    <name evidence="1" type="primary">mutS</name>
    <name type="ordered locus">LSEI_2235</name>
</gene>
<evidence type="ECO:0000255" key="1">
    <source>
        <dbReference type="HAMAP-Rule" id="MF_00096"/>
    </source>
</evidence>
<keyword id="KW-0067">ATP-binding</keyword>
<keyword id="KW-0227">DNA damage</keyword>
<keyword id="KW-0234">DNA repair</keyword>
<keyword id="KW-0238">DNA-binding</keyword>
<keyword id="KW-0547">Nucleotide-binding</keyword>
<keyword id="KW-1185">Reference proteome</keyword>
<proteinExistence type="inferred from homology"/>
<name>MUTS_LACP3</name>
<reference key="1">
    <citation type="journal article" date="2006" name="Proc. Natl. Acad. Sci. U.S.A.">
        <title>Comparative genomics of the lactic acid bacteria.</title>
        <authorList>
            <person name="Makarova K.S."/>
            <person name="Slesarev A."/>
            <person name="Wolf Y.I."/>
            <person name="Sorokin A."/>
            <person name="Mirkin B."/>
            <person name="Koonin E.V."/>
            <person name="Pavlov A."/>
            <person name="Pavlova N."/>
            <person name="Karamychev V."/>
            <person name="Polouchine N."/>
            <person name="Shakhova V."/>
            <person name="Grigoriev I."/>
            <person name="Lou Y."/>
            <person name="Rohksar D."/>
            <person name="Lucas S."/>
            <person name="Huang K."/>
            <person name="Goodstein D.M."/>
            <person name="Hawkins T."/>
            <person name="Plengvidhya V."/>
            <person name="Welker D."/>
            <person name="Hughes J."/>
            <person name="Goh Y."/>
            <person name="Benson A."/>
            <person name="Baldwin K."/>
            <person name="Lee J.-H."/>
            <person name="Diaz-Muniz I."/>
            <person name="Dosti B."/>
            <person name="Smeianov V."/>
            <person name="Wechter W."/>
            <person name="Barabote R."/>
            <person name="Lorca G."/>
            <person name="Altermann E."/>
            <person name="Barrangou R."/>
            <person name="Ganesan B."/>
            <person name="Xie Y."/>
            <person name="Rawsthorne H."/>
            <person name="Tamir D."/>
            <person name="Parker C."/>
            <person name="Breidt F."/>
            <person name="Broadbent J.R."/>
            <person name="Hutkins R."/>
            <person name="O'Sullivan D."/>
            <person name="Steele J."/>
            <person name="Unlu G."/>
            <person name="Saier M.H. Jr."/>
            <person name="Klaenhammer T."/>
            <person name="Richardson P."/>
            <person name="Kozyavkin S."/>
            <person name="Weimer B.C."/>
            <person name="Mills D.A."/>
        </authorList>
    </citation>
    <scope>NUCLEOTIDE SEQUENCE [LARGE SCALE GENOMIC DNA]</scope>
    <source>
        <strain>ATCC 334 / BCRC 17002 / CCUG 31169 / CIP 107868 / KCTC 3260 / NRRL B-441</strain>
    </source>
</reference>
<accession>Q035Z2</accession>
<organism>
    <name type="scientific">Lacticaseibacillus paracasei (strain ATCC 334 / BCRC 17002 / CCUG 31169 / CIP 107868 / KCTC 3260 / NRRL B-441)</name>
    <name type="common">Lactobacillus paracasei</name>
    <dbReference type="NCBI Taxonomy" id="321967"/>
    <lineage>
        <taxon>Bacteria</taxon>
        <taxon>Bacillati</taxon>
        <taxon>Bacillota</taxon>
        <taxon>Bacilli</taxon>
        <taxon>Lactobacillales</taxon>
        <taxon>Lactobacillaceae</taxon>
        <taxon>Lacticaseibacillus</taxon>
    </lineage>
</organism>